<accession>A7MIU0</accession>
<sequence>MNRLPNSASALACTAHALNLIEKRTLTHEEMKALNREVHDYFEQHVNPGFLEYRKSVTAGGDYGAVEWQAGGLNTLVDTQGQEFLDCLGGFGIFNVGHRNPVVVSAVENQLAKQPLHSQELLDPLRAMLAKTLAALTPGKLKYSFFCNSGTESVEAAIKLAKAYQSPRGKFTFVAASGAFHGKSLGALSATAKAAFRKPFMPLLPGFRHVPFGNIDALRELLGECKKTGDDVAAVILEPIQGEGGVILPPSGYLPAVRKLCDEYGALLIFDEVQTGMGRTGKMFACEHENVQPDILCLAKALGGGVMPIGATVATEEVFSVLFDNPFLHTTTFGGNPLACAAALATIHVLLEENLPAQAEQKGDMLLDGFRQLAREYPHLVQEARGRGMLMAIEFVDNETGYRFASEMFRQRVLVAGTLNNAKTIRIEPPLTLTIEQCEQVLTAARRALETLSTAQSTTAVATES</sequence>
<feature type="chain" id="PRO_0000379558" description="Putrescine aminotransferase">
    <location>
        <begin position="1"/>
        <end position="465"/>
    </location>
</feature>
<feature type="binding site" description="in other chain" evidence="1">
    <location>
        <begin position="150"/>
        <end position="151"/>
    </location>
    <ligand>
        <name>pyridoxal 5'-phosphate</name>
        <dbReference type="ChEBI" id="CHEBI:597326"/>
        <note>ligand shared between dimeric partners</note>
    </ligand>
</feature>
<feature type="binding site" description="in other chain" evidence="1">
    <location>
        <position position="274"/>
    </location>
    <ligand>
        <name>pyridoxal 5'-phosphate</name>
        <dbReference type="ChEBI" id="CHEBI:597326"/>
        <note>ligand shared between dimeric partners</note>
    </ligand>
</feature>
<feature type="binding site" evidence="1">
    <location>
        <position position="332"/>
    </location>
    <ligand>
        <name>pyridoxal 5'-phosphate</name>
        <dbReference type="ChEBI" id="CHEBI:597326"/>
        <note>ligand shared between dimeric partners</note>
    </ligand>
</feature>
<feature type="modified residue" description="N6-(pyridoxal phosphate)lysine" evidence="1">
    <location>
        <position position="300"/>
    </location>
</feature>
<keyword id="KW-0032">Aminotransferase</keyword>
<keyword id="KW-0663">Pyridoxal phosphate</keyword>
<keyword id="KW-1185">Reference proteome</keyword>
<keyword id="KW-0808">Transferase</keyword>
<name>PAT_CROS8</name>
<gene>
    <name evidence="1" type="primary">patA</name>
    <name type="ordered locus">ESA_03492</name>
</gene>
<proteinExistence type="inferred from homology"/>
<comment type="function">
    <text evidence="1">Catalyzes the aminotransferase reaction from putrescine to 2-oxoglutarate, leading to glutamate and 4-aminobutanal, which spontaneously cyclizes to form 1-pyrroline. This is the first step in one of two pathways for putrescine degradation, where putrescine is converted into 4-aminobutanoate (gamma-aminobutyrate or GABA) via 4-aminobutanal. Also functions as a cadaverine transaminase in a a L-lysine degradation pathway to succinate that proceeds via cadaverine, glutarate and L-2-hydroxyglutarate.</text>
</comment>
<comment type="catalytic activity">
    <reaction evidence="1">
        <text>an alkane-alpha,omega-diamine + 2-oxoglutarate = an omega-aminoaldehyde + L-glutamate</text>
        <dbReference type="Rhea" id="RHEA:18217"/>
        <dbReference type="Rhea" id="RHEA-COMP:9766"/>
        <dbReference type="Rhea" id="RHEA-COMP:12750"/>
        <dbReference type="ChEBI" id="CHEBI:16810"/>
        <dbReference type="ChEBI" id="CHEBI:29985"/>
        <dbReference type="ChEBI" id="CHEBI:70977"/>
        <dbReference type="ChEBI" id="CHEBI:133427"/>
        <dbReference type="EC" id="2.6.1.29"/>
    </reaction>
    <physiologicalReaction direction="left-to-right" evidence="1">
        <dbReference type="Rhea" id="RHEA:18218"/>
    </physiologicalReaction>
</comment>
<comment type="catalytic activity">
    <reaction evidence="1">
        <text>putrescine + 2-oxoglutarate = 1-pyrroline + L-glutamate + H2O</text>
        <dbReference type="Rhea" id="RHEA:12268"/>
        <dbReference type="ChEBI" id="CHEBI:15377"/>
        <dbReference type="ChEBI" id="CHEBI:16810"/>
        <dbReference type="ChEBI" id="CHEBI:29985"/>
        <dbReference type="ChEBI" id="CHEBI:36781"/>
        <dbReference type="ChEBI" id="CHEBI:326268"/>
        <dbReference type="EC" id="2.6.1.82"/>
    </reaction>
    <physiologicalReaction direction="left-to-right" evidence="1">
        <dbReference type="Rhea" id="RHEA:12269"/>
    </physiologicalReaction>
</comment>
<comment type="catalytic activity">
    <reaction evidence="1">
        <text>cadaverine + 2-oxoglutarate = 5-aminopentanal + L-glutamate</text>
        <dbReference type="Rhea" id="RHEA:61624"/>
        <dbReference type="ChEBI" id="CHEBI:16810"/>
        <dbReference type="ChEBI" id="CHEBI:29985"/>
        <dbReference type="ChEBI" id="CHEBI:58384"/>
        <dbReference type="ChEBI" id="CHEBI:144896"/>
    </reaction>
    <physiologicalReaction direction="left-to-right" evidence="1">
        <dbReference type="Rhea" id="RHEA:61625"/>
    </physiologicalReaction>
</comment>
<comment type="cofactor">
    <cofactor evidence="1">
        <name>pyridoxal 5'-phosphate</name>
        <dbReference type="ChEBI" id="CHEBI:597326"/>
    </cofactor>
</comment>
<comment type="pathway">
    <text evidence="1">Amine and polyamine degradation; putrescine degradation; 4-aminobutanal from putrescine (transaminase route): step 1/1.</text>
</comment>
<comment type="similarity">
    <text evidence="1">Belongs to the class-III pyridoxal-phosphate-dependent aminotransferase family. Putrescine aminotransferase subfamily.</text>
</comment>
<comment type="sequence caution" evidence="2">
    <conflict type="erroneous initiation">
        <sequence resource="EMBL-CDS" id="ABU78707"/>
    </conflict>
</comment>
<reference key="1">
    <citation type="journal article" date="2010" name="PLoS ONE">
        <title>Genome sequence of Cronobacter sakazakii BAA-894 and comparative genomic hybridization analysis with other Cronobacter species.</title>
        <authorList>
            <person name="Kucerova E."/>
            <person name="Clifton S.W."/>
            <person name="Xia X.Q."/>
            <person name="Long F."/>
            <person name="Porwollik S."/>
            <person name="Fulton L."/>
            <person name="Fronick C."/>
            <person name="Minx P."/>
            <person name="Kyung K."/>
            <person name="Warren W."/>
            <person name="Fulton R."/>
            <person name="Feng D."/>
            <person name="Wollam A."/>
            <person name="Shah N."/>
            <person name="Bhonagiri V."/>
            <person name="Nash W.E."/>
            <person name="Hallsworth-Pepin K."/>
            <person name="Wilson R.K."/>
            <person name="McClelland M."/>
            <person name="Forsythe S.J."/>
        </authorList>
    </citation>
    <scope>NUCLEOTIDE SEQUENCE [LARGE SCALE GENOMIC DNA]</scope>
    <source>
        <strain>ATCC BAA-894</strain>
    </source>
</reference>
<protein>
    <recommendedName>
        <fullName evidence="1">Putrescine aminotransferase</fullName>
        <shortName evidence="1">PAT</shortName>
        <shortName evidence="1">PATase</shortName>
        <ecNumber evidence="1">2.6.1.82</ecNumber>
    </recommendedName>
    <alternativeName>
        <fullName evidence="1">Cadaverine transaminase</fullName>
    </alternativeName>
    <alternativeName>
        <fullName evidence="1">Diamine transaminase</fullName>
        <ecNumber evidence="1">2.6.1.29</ecNumber>
    </alternativeName>
    <alternativeName>
        <fullName evidence="1">Putrescine transaminase</fullName>
    </alternativeName>
    <alternativeName>
        <fullName evidence="1">Putrescine--2-oxoglutaric acid transaminase</fullName>
    </alternativeName>
</protein>
<organism>
    <name type="scientific">Cronobacter sakazakii (strain ATCC BAA-894)</name>
    <name type="common">Enterobacter sakazakii</name>
    <dbReference type="NCBI Taxonomy" id="290339"/>
    <lineage>
        <taxon>Bacteria</taxon>
        <taxon>Pseudomonadati</taxon>
        <taxon>Pseudomonadota</taxon>
        <taxon>Gammaproteobacteria</taxon>
        <taxon>Enterobacterales</taxon>
        <taxon>Enterobacteriaceae</taxon>
        <taxon>Cronobacter</taxon>
    </lineage>
</organism>
<dbReference type="EC" id="2.6.1.82" evidence="1"/>
<dbReference type="EC" id="2.6.1.29" evidence="1"/>
<dbReference type="EMBL" id="CP000783">
    <property type="protein sequence ID" value="ABU78707.1"/>
    <property type="status" value="ALT_INIT"/>
    <property type="molecule type" value="Genomic_DNA"/>
</dbReference>
<dbReference type="SMR" id="A7MIU0"/>
<dbReference type="KEGG" id="esa:ESA_03492"/>
<dbReference type="HOGENOM" id="CLU_016922_10_0_6"/>
<dbReference type="UniPathway" id="UPA00188">
    <property type="reaction ID" value="UER00290"/>
</dbReference>
<dbReference type="Proteomes" id="UP000000260">
    <property type="component" value="Chromosome"/>
</dbReference>
<dbReference type="GO" id="GO:0019161">
    <property type="term" value="F:diamine transaminase activity"/>
    <property type="evidence" value="ECO:0007669"/>
    <property type="project" value="UniProtKB-EC"/>
</dbReference>
<dbReference type="GO" id="GO:0042802">
    <property type="term" value="F:identical protein binding"/>
    <property type="evidence" value="ECO:0007669"/>
    <property type="project" value="TreeGrafter"/>
</dbReference>
<dbReference type="GO" id="GO:0033094">
    <property type="term" value="F:putrescine--2-oxoglutarate transaminase activity"/>
    <property type="evidence" value="ECO:0007669"/>
    <property type="project" value="UniProtKB-UniRule"/>
</dbReference>
<dbReference type="GO" id="GO:0030170">
    <property type="term" value="F:pyridoxal phosphate binding"/>
    <property type="evidence" value="ECO:0007669"/>
    <property type="project" value="UniProtKB-UniRule"/>
</dbReference>
<dbReference type="GO" id="GO:0019477">
    <property type="term" value="P:L-lysine catabolic process"/>
    <property type="evidence" value="ECO:0007669"/>
    <property type="project" value="UniProtKB-UniRule"/>
</dbReference>
<dbReference type="GO" id="GO:0009447">
    <property type="term" value="P:putrescine catabolic process"/>
    <property type="evidence" value="ECO:0007669"/>
    <property type="project" value="UniProtKB-UniRule"/>
</dbReference>
<dbReference type="CDD" id="cd00610">
    <property type="entry name" value="OAT_like"/>
    <property type="match status" value="1"/>
</dbReference>
<dbReference type="FunFam" id="3.40.640.10:FF:000004">
    <property type="entry name" value="Acetylornithine aminotransferase"/>
    <property type="match status" value="1"/>
</dbReference>
<dbReference type="Gene3D" id="3.90.1150.10">
    <property type="entry name" value="Aspartate Aminotransferase, domain 1"/>
    <property type="match status" value="1"/>
</dbReference>
<dbReference type="Gene3D" id="3.40.640.10">
    <property type="entry name" value="Type I PLP-dependent aspartate aminotransferase-like (Major domain)"/>
    <property type="match status" value="1"/>
</dbReference>
<dbReference type="HAMAP" id="MF_01276">
    <property type="entry name" value="Putres_aminotrans_3"/>
    <property type="match status" value="1"/>
</dbReference>
<dbReference type="InterPro" id="IPR005814">
    <property type="entry name" value="Aminotrans_3"/>
</dbReference>
<dbReference type="InterPro" id="IPR049704">
    <property type="entry name" value="Aminotrans_3_PPA_site"/>
</dbReference>
<dbReference type="InterPro" id="IPR050103">
    <property type="entry name" value="Class-III_PLP-dep_AT"/>
</dbReference>
<dbReference type="InterPro" id="IPR017747">
    <property type="entry name" value="Putrescine_aminotransferase"/>
</dbReference>
<dbReference type="InterPro" id="IPR015424">
    <property type="entry name" value="PyrdxlP-dep_Trfase"/>
</dbReference>
<dbReference type="InterPro" id="IPR015421">
    <property type="entry name" value="PyrdxlP-dep_Trfase_major"/>
</dbReference>
<dbReference type="InterPro" id="IPR015422">
    <property type="entry name" value="PyrdxlP-dep_Trfase_small"/>
</dbReference>
<dbReference type="NCBIfam" id="NF008570">
    <property type="entry name" value="PRK11522.1"/>
    <property type="match status" value="1"/>
</dbReference>
<dbReference type="NCBIfam" id="TIGR03372">
    <property type="entry name" value="putres_am_tran"/>
    <property type="match status" value="1"/>
</dbReference>
<dbReference type="PANTHER" id="PTHR11986">
    <property type="entry name" value="AMINOTRANSFERASE CLASS III"/>
    <property type="match status" value="1"/>
</dbReference>
<dbReference type="PANTHER" id="PTHR11986:SF112">
    <property type="entry name" value="PUTRESCINE AMINOTRANSFERASE"/>
    <property type="match status" value="1"/>
</dbReference>
<dbReference type="Pfam" id="PF00202">
    <property type="entry name" value="Aminotran_3"/>
    <property type="match status" value="1"/>
</dbReference>
<dbReference type="PIRSF" id="PIRSF000521">
    <property type="entry name" value="Transaminase_4ab_Lys_Orn"/>
    <property type="match status" value="1"/>
</dbReference>
<dbReference type="SUPFAM" id="SSF53383">
    <property type="entry name" value="PLP-dependent transferases"/>
    <property type="match status" value="1"/>
</dbReference>
<dbReference type="PROSITE" id="PS00600">
    <property type="entry name" value="AA_TRANSFER_CLASS_3"/>
    <property type="match status" value="1"/>
</dbReference>
<evidence type="ECO:0000255" key="1">
    <source>
        <dbReference type="HAMAP-Rule" id="MF_01276"/>
    </source>
</evidence>
<evidence type="ECO:0000305" key="2"/>